<proteinExistence type="inferred from homology"/>
<feature type="chain" id="PRO_1000073483" description="Protein translocase subunit SecA">
    <location>
        <begin position="1"/>
        <end position="787"/>
    </location>
</feature>
<feature type="binding site" evidence="1">
    <location>
        <position position="85"/>
    </location>
    <ligand>
        <name>ATP</name>
        <dbReference type="ChEBI" id="CHEBI:30616"/>
    </ligand>
</feature>
<feature type="binding site" evidence="1">
    <location>
        <begin position="103"/>
        <end position="107"/>
    </location>
    <ligand>
        <name>ATP</name>
        <dbReference type="ChEBI" id="CHEBI:30616"/>
    </ligand>
</feature>
<feature type="binding site" evidence="1">
    <location>
        <position position="492"/>
    </location>
    <ligand>
        <name>ATP</name>
        <dbReference type="ChEBI" id="CHEBI:30616"/>
    </ligand>
</feature>
<reference key="1">
    <citation type="journal article" date="2003" name="Proc. Natl. Acad. Sci. U.S.A.">
        <title>Complete genome sequence of Lactobacillus plantarum WCFS1.</title>
        <authorList>
            <person name="Kleerebezem M."/>
            <person name="Boekhorst J."/>
            <person name="van Kranenburg R."/>
            <person name="Molenaar D."/>
            <person name="Kuipers O.P."/>
            <person name="Leer R."/>
            <person name="Tarchini R."/>
            <person name="Peters S.A."/>
            <person name="Sandbrink H.M."/>
            <person name="Fiers M.W.E.J."/>
            <person name="Stiekema W."/>
            <person name="Klein Lankhorst R.M."/>
            <person name="Bron P.A."/>
            <person name="Hoffer S.M."/>
            <person name="Nierop Groot M.N."/>
            <person name="Kerkhoven R."/>
            <person name="De Vries M."/>
            <person name="Ursing B."/>
            <person name="De Vos W.M."/>
            <person name="Siezen R.J."/>
        </authorList>
    </citation>
    <scope>NUCLEOTIDE SEQUENCE [LARGE SCALE GENOMIC DNA]</scope>
    <source>
        <strain>ATCC BAA-793 / NCIMB 8826 / WCFS1</strain>
    </source>
</reference>
<reference key="2">
    <citation type="journal article" date="2012" name="J. Bacteriol.">
        <title>Complete resequencing and reannotation of the Lactobacillus plantarum WCFS1 genome.</title>
        <authorList>
            <person name="Siezen R.J."/>
            <person name="Francke C."/>
            <person name="Renckens B."/>
            <person name="Boekhorst J."/>
            <person name="Wels M."/>
            <person name="Kleerebezem M."/>
            <person name="van Hijum S.A."/>
        </authorList>
    </citation>
    <scope>NUCLEOTIDE SEQUENCE [LARGE SCALE GENOMIC DNA]</scope>
    <scope>GENOME REANNOTATION</scope>
    <source>
        <strain>ATCC BAA-793 / NCIMB 8826 / WCFS1</strain>
    </source>
</reference>
<protein>
    <recommendedName>
        <fullName evidence="1">Protein translocase subunit SecA</fullName>
        <ecNumber evidence="1">7.4.2.8</ecNumber>
    </recommendedName>
</protein>
<gene>
    <name evidence="1" type="primary">secA</name>
    <name type="ordered locus">lp_0739</name>
</gene>
<dbReference type="EC" id="7.4.2.8" evidence="1"/>
<dbReference type="EMBL" id="AL935263">
    <property type="protein sequence ID" value="CCC78206.1"/>
    <property type="molecule type" value="Genomic_DNA"/>
</dbReference>
<dbReference type="RefSeq" id="WP_003643952.1">
    <property type="nucleotide sequence ID" value="NC_004567.2"/>
</dbReference>
<dbReference type="RefSeq" id="YP_004888720.1">
    <property type="nucleotide sequence ID" value="NC_004567.2"/>
</dbReference>
<dbReference type="SMR" id="Q88YL7"/>
<dbReference type="STRING" id="220668.lp_0739"/>
<dbReference type="EnsemblBacteria" id="CCC78206">
    <property type="protein sequence ID" value="CCC78206"/>
    <property type="gene ID" value="lp_0739"/>
</dbReference>
<dbReference type="GeneID" id="89668307"/>
<dbReference type="KEGG" id="lpl:lp_0739"/>
<dbReference type="PATRIC" id="fig|220668.9.peg.622"/>
<dbReference type="eggNOG" id="COG0653">
    <property type="taxonomic scope" value="Bacteria"/>
</dbReference>
<dbReference type="HOGENOM" id="CLU_005314_3_2_9"/>
<dbReference type="OrthoDB" id="9805579at2"/>
<dbReference type="PhylomeDB" id="Q88YL7"/>
<dbReference type="Proteomes" id="UP000000432">
    <property type="component" value="Chromosome"/>
</dbReference>
<dbReference type="GO" id="GO:0031522">
    <property type="term" value="C:cell envelope Sec protein transport complex"/>
    <property type="evidence" value="ECO:0007669"/>
    <property type="project" value="TreeGrafter"/>
</dbReference>
<dbReference type="GO" id="GO:0005829">
    <property type="term" value="C:cytosol"/>
    <property type="evidence" value="ECO:0007669"/>
    <property type="project" value="TreeGrafter"/>
</dbReference>
<dbReference type="GO" id="GO:0005886">
    <property type="term" value="C:plasma membrane"/>
    <property type="evidence" value="ECO:0007669"/>
    <property type="project" value="UniProtKB-SubCell"/>
</dbReference>
<dbReference type="GO" id="GO:0005524">
    <property type="term" value="F:ATP binding"/>
    <property type="evidence" value="ECO:0007669"/>
    <property type="project" value="UniProtKB-UniRule"/>
</dbReference>
<dbReference type="GO" id="GO:0008564">
    <property type="term" value="F:protein-exporting ATPase activity"/>
    <property type="evidence" value="ECO:0007669"/>
    <property type="project" value="UniProtKB-EC"/>
</dbReference>
<dbReference type="GO" id="GO:0065002">
    <property type="term" value="P:intracellular protein transmembrane transport"/>
    <property type="evidence" value="ECO:0007669"/>
    <property type="project" value="UniProtKB-UniRule"/>
</dbReference>
<dbReference type="GO" id="GO:0017038">
    <property type="term" value="P:protein import"/>
    <property type="evidence" value="ECO:0007669"/>
    <property type="project" value="InterPro"/>
</dbReference>
<dbReference type="GO" id="GO:0006605">
    <property type="term" value="P:protein targeting"/>
    <property type="evidence" value="ECO:0007669"/>
    <property type="project" value="UniProtKB-UniRule"/>
</dbReference>
<dbReference type="GO" id="GO:0043952">
    <property type="term" value="P:protein transport by the Sec complex"/>
    <property type="evidence" value="ECO:0007669"/>
    <property type="project" value="TreeGrafter"/>
</dbReference>
<dbReference type="CDD" id="cd17928">
    <property type="entry name" value="DEXDc_SecA"/>
    <property type="match status" value="1"/>
</dbReference>
<dbReference type="CDD" id="cd18803">
    <property type="entry name" value="SF2_C_secA"/>
    <property type="match status" value="1"/>
</dbReference>
<dbReference type="FunFam" id="1.10.3060.10:FF:000002">
    <property type="entry name" value="Preprotein translocase subunit SecA"/>
    <property type="match status" value="1"/>
</dbReference>
<dbReference type="FunFam" id="3.40.50.300:FF:000429">
    <property type="entry name" value="Preprotein translocase subunit SecA"/>
    <property type="match status" value="1"/>
</dbReference>
<dbReference type="FunFam" id="3.90.1440.10:FF:000001">
    <property type="entry name" value="Preprotein translocase subunit SecA"/>
    <property type="match status" value="1"/>
</dbReference>
<dbReference type="Gene3D" id="1.10.3060.10">
    <property type="entry name" value="Helical scaffold and wing domains of SecA"/>
    <property type="match status" value="1"/>
</dbReference>
<dbReference type="Gene3D" id="3.40.50.300">
    <property type="entry name" value="P-loop containing nucleotide triphosphate hydrolases"/>
    <property type="match status" value="2"/>
</dbReference>
<dbReference type="Gene3D" id="3.90.1440.10">
    <property type="entry name" value="SecA, preprotein cross-linking domain"/>
    <property type="match status" value="1"/>
</dbReference>
<dbReference type="HAMAP" id="MF_01382">
    <property type="entry name" value="SecA"/>
    <property type="match status" value="1"/>
</dbReference>
<dbReference type="InterPro" id="IPR014001">
    <property type="entry name" value="Helicase_ATP-bd"/>
</dbReference>
<dbReference type="InterPro" id="IPR001650">
    <property type="entry name" value="Helicase_C-like"/>
</dbReference>
<dbReference type="InterPro" id="IPR027417">
    <property type="entry name" value="P-loop_NTPase"/>
</dbReference>
<dbReference type="InterPro" id="IPR000185">
    <property type="entry name" value="SecA"/>
</dbReference>
<dbReference type="InterPro" id="IPR020937">
    <property type="entry name" value="SecA_CS"/>
</dbReference>
<dbReference type="InterPro" id="IPR011115">
    <property type="entry name" value="SecA_DEAD"/>
</dbReference>
<dbReference type="InterPro" id="IPR014018">
    <property type="entry name" value="SecA_motor_DEAD"/>
</dbReference>
<dbReference type="InterPro" id="IPR011130">
    <property type="entry name" value="SecA_preprotein_X-link_dom"/>
</dbReference>
<dbReference type="InterPro" id="IPR044722">
    <property type="entry name" value="SecA_SF2_C"/>
</dbReference>
<dbReference type="InterPro" id="IPR011116">
    <property type="entry name" value="SecA_Wing/Scaffold"/>
</dbReference>
<dbReference type="InterPro" id="IPR036266">
    <property type="entry name" value="SecA_Wing/Scaffold_sf"/>
</dbReference>
<dbReference type="InterPro" id="IPR036670">
    <property type="entry name" value="SecA_X-link_sf"/>
</dbReference>
<dbReference type="NCBIfam" id="NF006630">
    <property type="entry name" value="PRK09200.1"/>
    <property type="match status" value="1"/>
</dbReference>
<dbReference type="NCBIfam" id="NF009538">
    <property type="entry name" value="PRK12904.1"/>
    <property type="match status" value="1"/>
</dbReference>
<dbReference type="NCBIfam" id="TIGR00963">
    <property type="entry name" value="secA"/>
    <property type="match status" value="1"/>
</dbReference>
<dbReference type="PANTHER" id="PTHR30612:SF0">
    <property type="entry name" value="CHLOROPLAST PROTEIN-TRANSPORTING ATPASE"/>
    <property type="match status" value="1"/>
</dbReference>
<dbReference type="PANTHER" id="PTHR30612">
    <property type="entry name" value="SECA INNER MEMBRANE COMPONENT OF SEC PROTEIN SECRETION SYSTEM"/>
    <property type="match status" value="1"/>
</dbReference>
<dbReference type="Pfam" id="PF21090">
    <property type="entry name" value="P-loop_SecA"/>
    <property type="match status" value="2"/>
</dbReference>
<dbReference type="Pfam" id="PF07517">
    <property type="entry name" value="SecA_DEAD"/>
    <property type="match status" value="1"/>
</dbReference>
<dbReference type="Pfam" id="PF01043">
    <property type="entry name" value="SecA_PP_bind"/>
    <property type="match status" value="1"/>
</dbReference>
<dbReference type="Pfam" id="PF07516">
    <property type="entry name" value="SecA_SW"/>
    <property type="match status" value="1"/>
</dbReference>
<dbReference type="PRINTS" id="PR00906">
    <property type="entry name" value="SECA"/>
</dbReference>
<dbReference type="SMART" id="SM00957">
    <property type="entry name" value="SecA_DEAD"/>
    <property type="match status" value="1"/>
</dbReference>
<dbReference type="SMART" id="SM00958">
    <property type="entry name" value="SecA_PP_bind"/>
    <property type="match status" value="1"/>
</dbReference>
<dbReference type="SUPFAM" id="SSF81886">
    <property type="entry name" value="Helical scaffold and wing domains of SecA"/>
    <property type="match status" value="1"/>
</dbReference>
<dbReference type="SUPFAM" id="SSF52540">
    <property type="entry name" value="P-loop containing nucleoside triphosphate hydrolases"/>
    <property type="match status" value="2"/>
</dbReference>
<dbReference type="SUPFAM" id="SSF81767">
    <property type="entry name" value="Pre-protein crosslinking domain of SecA"/>
    <property type="match status" value="1"/>
</dbReference>
<dbReference type="PROSITE" id="PS01312">
    <property type="entry name" value="SECA"/>
    <property type="match status" value="1"/>
</dbReference>
<dbReference type="PROSITE" id="PS51196">
    <property type="entry name" value="SECA_MOTOR_DEAD"/>
    <property type="match status" value="1"/>
</dbReference>
<keyword id="KW-0067">ATP-binding</keyword>
<keyword id="KW-1003">Cell membrane</keyword>
<keyword id="KW-0963">Cytoplasm</keyword>
<keyword id="KW-0472">Membrane</keyword>
<keyword id="KW-0547">Nucleotide-binding</keyword>
<keyword id="KW-0653">Protein transport</keyword>
<keyword id="KW-1185">Reference proteome</keyword>
<keyword id="KW-1278">Translocase</keyword>
<keyword id="KW-0811">Translocation</keyword>
<keyword id="KW-0813">Transport</keyword>
<sequence>MANILKRWVESDKRTIRRLDKIANKVEAYADEYGKLSDADLQAKTPEFRERYKEGESLDDLLPEAFATAREGAKRVLGLYPFHVQILGGIVLHQGDIAEMKTGEGKTLTATMPVYLNAISGKGVHVVTVNEYLSARDATEMGELYNWLGMSVGINGAEKSPEEKRAAYNADITYSTNGEIGFDYLRDNMVVYREDMVQRPLNFAIIDEVDSILIDEARTPLIISGQSEGTTGMYKRADRFAKTLTKDEDYKVDLESKTVALLDEGIRKAEKYFGLENLYDTDNTALNHYLDEALRANYIMLKDKDYVISDGQALIVDSFTGRIMDGRRFSDGLHQAIEAKEHVEIQEETKTMANITYQNLFRMYKKLSGMTGTAKTEQEEFREIYNMEVITIPTNRPMIRDDRSDLLYPTLQSKFNAVVKEIKQLHEKGQPMLIGTVAVETSEYLSHRLDEENIPHVVLNAKNHAKEADIVANAGQRGAVTIATNMAGRGTDIKLGPGVKEVGGLAVIGTERHESRRIDNQLRGRAGRQGDPGMSQFYLSLEDDLMLRFGSERIKNFLQRMNVEDDDAVIQSRMITRQVESAQKRVEGNNYDSRKNVLQYDDVMRAQREVIYGERQQVIMEEKSLKPVIMPMIKRTVERTVQLHMQGDAKDWDLDAVVDFAQAAMVKEDSISVADLKGKSPAEVEAYLMDRVDKIYADKAKQLYDAGQMLEFEKVVILRVVDSHWTDHIDAMDQLRQSIGLRGYGQLNPLVEYQRDGYQMFEEMVADIDYDTTRLFMKSEIRQNIQR</sequence>
<accession>Q88YL7</accession>
<accession>F9ULW7</accession>
<evidence type="ECO:0000255" key="1">
    <source>
        <dbReference type="HAMAP-Rule" id="MF_01382"/>
    </source>
</evidence>
<comment type="function">
    <text evidence="1">Part of the Sec protein translocase complex. Interacts with the SecYEG preprotein conducting channel. Has a central role in coupling the hydrolysis of ATP to the transfer of proteins into and across the cell membrane, serving as an ATP-driven molecular motor driving the stepwise translocation of polypeptide chains across the membrane.</text>
</comment>
<comment type="catalytic activity">
    <reaction evidence="1">
        <text>ATP + H2O + cellular proteinSide 1 = ADP + phosphate + cellular proteinSide 2.</text>
        <dbReference type="EC" id="7.4.2.8"/>
    </reaction>
</comment>
<comment type="subunit">
    <text evidence="1">Monomer and homodimer. Part of the essential Sec protein translocation apparatus which comprises SecA, SecYEG and auxiliary proteins SecDF. Other proteins may also be involved.</text>
</comment>
<comment type="subcellular location">
    <subcellularLocation>
        <location evidence="1">Cell membrane</location>
        <topology evidence="1">Peripheral membrane protein</topology>
        <orientation evidence="1">Cytoplasmic side</orientation>
    </subcellularLocation>
    <subcellularLocation>
        <location evidence="1">Cytoplasm</location>
    </subcellularLocation>
    <text evidence="1">Distribution is 50-50.</text>
</comment>
<comment type="similarity">
    <text evidence="1">Belongs to the SecA family.</text>
</comment>
<name>SECA_LACPL</name>
<organism>
    <name type="scientific">Lactiplantibacillus plantarum (strain ATCC BAA-793 / NCIMB 8826 / WCFS1)</name>
    <name type="common">Lactobacillus plantarum</name>
    <dbReference type="NCBI Taxonomy" id="220668"/>
    <lineage>
        <taxon>Bacteria</taxon>
        <taxon>Bacillati</taxon>
        <taxon>Bacillota</taxon>
        <taxon>Bacilli</taxon>
        <taxon>Lactobacillales</taxon>
        <taxon>Lactobacillaceae</taxon>
        <taxon>Lactiplantibacillus</taxon>
    </lineage>
</organism>